<sequence length="334" mass="37235">MYNTDIVIIGSGPVGLFAVFQAGMLGMKCHVIDAQEVIGGQCITLYPEKHIYDIPAYPKITAKELIEQLKSQAAPFNPVYHLNQQAIELNKHNDFFEIKTSKNTIIKSKVIIIAAGAGAFGPNKPPLANIEDFEGKSIFYFINDKSKFLGKNIVVAGGGDSAVDWTIALSEIANKIYLVHRRDKFTAATESIRQLRHIAETGKIELVTGYQLNNLDGHNNELQAVIVKDLQNNIRKLDANILLPFFGLKQDLGPLANWGLNVKLQHIEVDNYYYQTNIKGIYAIGDVAHYVGKLKLIITGFAEAAHSINHAYSRVFDGKALHFEYSTNKYEQKQ</sequence>
<keyword id="KW-0274">FAD</keyword>
<keyword id="KW-0285">Flavoprotein</keyword>
<keyword id="KW-0521">NADP</keyword>
<keyword id="KW-0560">Oxidoreductase</keyword>
<dbReference type="EC" id="1.18.1.2" evidence="1"/>
<dbReference type="EMBL" id="AE017197">
    <property type="protein sequence ID" value="AAU03972.1"/>
    <property type="molecule type" value="Genomic_DNA"/>
</dbReference>
<dbReference type="RefSeq" id="WP_011190953.1">
    <property type="nucleotide sequence ID" value="NC_006142.1"/>
</dbReference>
<dbReference type="SMR" id="Q68WM0"/>
<dbReference type="KEGG" id="rty:RT0500"/>
<dbReference type="eggNOG" id="COG0492">
    <property type="taxonomic scope" value="Bacteria"/>
</dbReference>
<dbReference type="HOGENOM" id="CLU_031864_5_5_5"/>
<dbReference type="OrthoDB" id="9806179at2"/>
<dbReference type="Proteomes" id="UP000000604">
    <property type="component" value="Chromosome"/>
</dbReference>
<dbReference type="GO" id="GO:0004324">
    <property type="term" value="F:ferredoxin-NADP+ reductase activity"/>
    <property type="evidence" value="ECO:0007669"/>
    <property type="project" value="UniProtKB-UniRule"/>
</dbReference>
<dbReference type="GO" id="GO:0050660">
    <property type="term" value="F:flavin adenine dinucleotide binding"/>
    <property type="evidence" value="ECO:0007669"/>
    <property type="project" value="UniProtKB-UniRule"/>
</dbReference>
<dbReference type="GO" id="GO:0050661">
    <property type="term" value="F:NADP binding"/>
    <property type="evidence" value="ECO:0007669"/>
    <property type="project" value="UniProtKB-UniRule"/>
</dbReference>
<dbReference type="Gene3D" id="3.50.50.60">
    <property type="entry name" value="FAD/NAD(P)-binding domain"/>
    <property type="match status" value="2"/>
</dbReference>
<dbReference type="HAMAP" id="MF_01685">
    <property type="entry name" value="FENR2"/>
    <property type="match status" value="1"/>
</dbReference>
<dbReference type="InterPro" id="IPR036188">
    <property type="entry name" value="FAD/NAD-bd_sf"/>
</dbReference>
<dbReference type="InterPro" id="IPR023753">
    <property type="entry name" value="FAD/NAD-binding_dom"/>
</dbReference>
<dbReference type="InterPro" id="IPR022890">
    <property type="entry name" value="Fd--NADP_Rdtase_type_2"/>
</dbReference>
<dbReference type="InterPro" id="IPR050097">
    <property type="entry name" value="Ferredoxin-NADP_redctase_2"/>
</dbReference>
<dbReference type="PANTHER" id="PTHR48105">
    <property type="entry name" value="THIOREDOXIN REDUCTASE 1-RELATED-RELATED"/>
    <property type="match status" value="1"/>
</dbReference>
<dbReference type="Pfam" id="PF07992">
    <property type="entry name" value="Pyr_redox_2"/>
    <property type="match status" value="1"/>
</dbReference>
<dbReference type="PRINTS" id="PR00368">
    <property type="entry name" value="FADPNR"/>
</dbReference>
<dbReference type="PRINTS" id="PR00469">
    <property type="entry name" value="PNDRDTASEII"/>
</dbReference>
<dbReference type="SUPFAM" id="SSF51905">
    <property type="entry name" value="FAD/NAD(P)-binding domain"/>
    <property type="match status" value="1"/>
</dbReference>
<organism>
    <name type="scientific">Rickettsia typhi (strain ATCC VR-144 / Wilmington)</name>
    <dbReference type="NCBI Taxonomy" id="257363"/>
    <lineage>
        <taxon>Bacteria</taxon>
        <taxon>Pseudomonadati</taxon>
        <taxon>Pseudomonadota</taxon>
        <taxon>Alphaproteobacteria</taxon>
        <taxon>Rickettsiales</taxon>
        <taxon>Rickettsiaceae</taxon>
        <taxon>Rickettsieae</taxon>
        <taxon>Rickettsia</taxon>
        <taxon>typhus group</taxon>
    </lineage>
</organism>
<reference key="1">
    <citation type="journal article" date="2004" name="J. Bacteriol.">
        <title>Complete genome sequence of Rickettsia typhi and comparison with sequences of other Rickettsiae.</title>
        <authorList>
            <person name="McLeod M.P."/>
            <person name="Qin X."/>
            <person name="Karpathy S.E."/>
            <person name="Gioia J."/>
            <person name="Highlander S.K."/>
            <person name="Fox G.E."/>
            <person name="McNeill T.Z."/>
            <person name="Jiang H."/>
            <person name="Muzny D."/>
            <person name="Jacob L.S."/>
            <person name="Hawes A.C."/>
            <person name="Sodergren E."/>
            <person name="Gill R."/>
            <person name="Hume J."/>
            <person name="Morgan M."/>
            <person name="Fan G."/>
            <person name="Amin A.G."/>
            <person name="Gibbs R.A."/>
            <person name="Hong C."/>
            <person name="Yu X.-J."/>
            <person name="Walker D.H."/>
            <person name="Weinstock G.M."/>
        </authorList>
    </citation>
    <scope>NUCLEOTIDE SEQUENCE [LARGE SCALE GENOMIC DNA]</scope>
    <source>
        <strain>ATCC VR-144 / Wilmington</strain>
    </source>
</reference>
<accession>Q68WM0</accession>
<protein>
    <recommendedName>
        <fullName evidence="1">Ferredoxin--NADP reductase</fullName>
        <shortName evidence="1">FNR</shortName>
        <shortName evidence="1">Fd-NADP(+) reductase</shortName>
        <ecNumber evidence="1">1.18.1.2</ecNumber>
    </recommendedName>
</protein>
<name>FENR_RICTY</name>
<evidence type="ECO:0000255" key="1">
    <source>
        <dbReference type="HAMAP-Rule" id="MF_01685"/>
    </source>
</evidence>
<feature type="chain" id="PRO_0000364930" description="Ferredoxin--NADP reductase">
    <location>
        <begin position="1"/>
        <end position="334"/>
    </location>
</feature>
<feature type="binding site" evidence="1">
    <location>
        <position position="33"/>
    </location>
    <ligand>
        <name>FAD</name>
        <dbReference type="ChEBI" id="CHEBI:57692"/>
    </ligand>
</feature>
<feature type="binding site" evidence="1">
    <location>
        <position position="41"/>
    </location>
    <ligand>
        <name>FAD</name>
        <dbReference type="ChEBI" id="CHEBI:57692"/>
    </ligand>
</feature>
<feature type="binding site" evidence="1">
    <location>
        <position position="46"/>
    </location>
    <ligand>
        <name>FAD</name>
        <dbReference type="ChEBI" id="CHEBI:57692"/>
    </ligand>
</feature>
<feature type="binding site" evidence="1">
    <location>
        <position position="86"/>
    </location>
    <ligand>
        <name>FAD</name>
        <dbReference type="ChEBI" id="CHEBI:57692"/>
    </ligand>
</feature>
<feature type="binding site" evidence="1">
    <location>
        <position position="120"/>
    </location>
    <ligand>
        <name>FAD</name>
        <dbReference type="ChEBI" id="CHEBI:57692"/>
    </ligand>
</feature>
<feature type="binding site" evidence="1">
    <location>
        <position position="286"/>
    </location>
    <ligand>
        <name>FAD</name>
        <dbReference type="ChEBI" id="CHEBI:57692"/>
    </ligand>
</feature>
<feature type="binding site" evidence="1">
    <location>
        <position position="327"/>
    </location>
    <ligand>
        <name>FAD</name>
        <dbReference type="ChEBI" id="CHEBI:57692"/>
    </ligand>
</feature>
<proteinExistence type="inferred from homology"/>
<gene>
    <name type="ordered locus">RT0500</name>
</gene>
<comment type="catalytic activity">
    <reaction evidence="1">
        <text>2 reduced [2Fe-2S]-[ferredoxin] + NADP(+) + H(+) = 2 oxidized [2Fe-2S]-[ferredoxin] + NADPH</text>
        <dbReference type="Rhea" id="RHEA:20125"/>
        <dbReference type="Rhea" id="RHEA-COMP:10000"/>
        <dbReference type="Rhea" id="RHEA-COMP:10001"/>
        <dbReference type="ChEBI" id="CHEBI:15378"/>
        <dbReference type="ChEBI" id="CHEBI:33737"/>
        <dbReference type="ChEBI" id="CHEBI:33738"/>
        <dbReference type="ChEBI" id="CHEBI:57783"/>
        <dbReference type="ChEBI" id="CHEBI:58349"/>
        <dbReference type="EC" id="1.18.1.2"/>
    </reaction>
</comment>
<comment type="cofactor">
    <cofactor evidence="1">
        <name>FAD</name>
        <dbReference type="ChEBI" id="CHEBI:57692"/>
    </cofactor>
    <text evidence="1">Binds 1 FAD per subunit.</text>
</comment>
<comment type="subunit">
    <text evidence="1">Homodimer.</text>
</comment>
<comment type="similarity">
    <text evidence="1">Belongs to the ferredoxin--NADP reductase type 2 family.</text>
</comment>